<proteinExistence type="inferred from homology"/>
<keyword id="KW-1185">Reference proteome</keyword>
<keyword id="KW-0677">Repeat</keyword>
<keyword id="KW-0687">Ribonucleoprotein</keyword>
<keyword id="KW-0689">Ribosomal protein</keyword>
<keyword id="KW-0694">RNA-binding</keyword>
<protein>
    <recommendedName>
        <fullName evidence="3">Small ribosomal subunit protein bS1</fullName>
    </recommendedName>
    <alternativeName>
        <fullName>30S ribosomal protein S1</fullName>
    </alternativeName>
</protein>
<organism>
    <name type="scientific">Buchnera aphidicola subsp. Acyrthosiphon pisum (strain APS)</name>
    <name type="common">Acyrthosiphon pisum symbiotic bacterium</name>
    <dbReference type="NCBI Taxonomy" id="107806"/>
    <lineage>
        <taxon>Bacteria</taxon>
        <taxon>Pseudomonadati</taxon>
        <taxon>Pseudomonadota</taxon>
        <taxon>Gammaproteobacteria</taxon>
        <taxon>Enterobacterales</taxon>
        <taxon>Erwiniaceae</taxon>
        <taxon>Buchnera</taxon>
    </lineage>
</organism>
<accession>P57395</accession>
<feature type="chain" id="PRO_0000196027" description="Small ribosomal subunit protein bS1">
    <location>
        <begin position="1"/>
        <end position="558"/>
    </location>
</feature>
<feature type="domain" description="S1 motif 1" evidence="2">
    <location>
        <begin position="21"/>
        <end position="87"/>
    </location>
</feature>
<feature type="domain" description="S1 motif 2" evidence="2">
    <location>
        <begin position="105"/>
        <end position="171"/>
    </location>
</feature>
<feature type="domain" description="S1 motif 3" evidence="2">
    <location>
        <begin position="192"/>
        <end position="260"/>
    </location>
</feature>
<feature type="domain" description="S1 motif 4" evidence="2">
    <location>
        <begin position="277"/>
        <end position="347"/>
    </location>
</feature>
<feature type="domain" description="S1 motif 5" evidence="2">
    <location>
        <begin position="364"/>
        <end position="434"/>
    </location>
</feature>
<feature type="domain" description="S1 motif 6" evidence="2">
    <location>
        <begin position="451"/>
        <end position="520"/>
    </location>
</feature>
<sequence length="558" mass="62774">MNESFAQLFEESLKEIKTRPGSIIRGTIVSIEKDMVLVDAGLKSESAIPVEQFQNSQGLLDIQVGDQIDVALDAIEDGFGETLLSREKAKRHEAWLILEKAHEKSETVIGIINGKVKGGFTVELNDIRAFLPGSLVDVRPVRDTIHLEGKELEFKVIKLDQKRNNVVVSRRAVIESENSAERDQLLENLQEGMHVKGIVKNLTDYGAFVDLGGVDGLLHITDMAWKRVKHPSEIVNVGDEINIKILKFDRERTRVSLGLKQLGEDPWIAISKRYPEETKLSGRVTNLTDYGCFVEIEEGVEGLVHVSEMDWTNKNIHPSKVVTVNDVVEVMVLDIDEERRRISLGLKQCKINPWKEFSETHKKGVHVLGKIKSITDFGIFIGLNGGIDGLVHLSDISWTIPGEEAVVKYKKNDEISAVVLQVDAERERISLGIKQLEEDPFNTYIANHKKGAIITGIIKSLDKKNIIVKLPENLEGVIKLTEITRVYSETMINKLKIEDKILVKLSSFDRKNRIIYLTIHMIDEDEKKDLTAPSNNKTNDDSFSNVMTEAFKAAKNTE</sequence>
<evidence type="ECO:0000250" key="1"/>
<evidence type="ECO:0000255" key="2">
    <source>
        <dbReference type="PROSITE-ProRule" id="PRU00180"/>
    </source>
</evidence>
<evidence type="ECO:0000305" key="3"/>
<dbReference type="EMBL" id="BA000003">
    <property type="protein sequence ID" value="BAB13018.1"/>
    <property type="molecule type" value="Genomic_DNA"/>
</dbReference>
<dbReference type="RefSeq" id="NP_240132.1">
    <property type="nucleotide sequence ID" value="NC_002528.1"/>
</dbReference>
<dbReference type="RefSeq" id="WP_009874262.1">
    <property type="nucleotide sequence ID" value="NC_002528.1"/>
</dbReference>
<dbReference type="SMR" id="P57395"/>
<dbReference type="STRING" id="563178.BUAP5A_303"/>
<dbReference type="EnsemblBacteria" id="BAB13018">
    <property type="protein sequence ID" value="BAB13018"/>
    <property type="gene ID" value="BAB13018"/>
</dbReference>
<dbReference type="KEGG" id="buc:BU309"/>
<dbReference type="PATRIC" id="fig|107806.10.peg.320"/>
<dbReference type="eggNOG" id="COG0539">
    <property type="taxonomic scope" value="Bacteria"/>
</dbReference>
<dbReference type="HOGENOM" id="CLU_015805_2_1_6"/>
<dbReference type="Proteomes" id="UP000001806">
    <property type="component" value="Chromosome"/>
</dbReference>
<dbReference type="GO" id="GO:0022627">
    <property type="term" value="C:cytosolic small ribosomal subunit"/>
    <property type="evidence" value="ECO:0007669"/>
    <property type="project" value="TreeGrafter"/>
</dbReference>
<dbReference type="GO" id="GO:0003729">
    <property type="term" value="F:mRNA binding"/>
    <property type="evidence" value="ECO:0007669"/>
    <property type="project" value="TreeGrafter"/>
</dbReference>
<dbReference type="GO" id="GO:0003735">
    <property type="term" value="F:structural constituent of ribosome"/>
    <property type="evidence" value="ECO:0007669"/>
    <property type="project" value="InterPro"/>
</dbReference>
<dbReference type="GO" id="GO:0006412">
    <property type="term" value="P:translation"/>
    <property type="evidence" value="ECO:0007669"/>
    <property type="project" value="InterPro"/>
</dbReference>
<dbReference type="CDD" id="cd05687">
    <property type="entry name" value="S1_RPS1_repeat_ec1_hs1"/>
    <property type="match status" value="1"/>
</dbReference>
<dbReference type="CDD" id="cd04465">
    <property type="entry name" value="S1_RPS1_repeat_ec2_hs2"/>
    <property type="match status" value="1"/>
</dbReference>
<dbReference type="CDD" id="cd05688">
    <property type="entry name" value="S1_RPS1_repeat_ec3"/>
    <property type="match status" value="1"/>
</dbReference>
<dbReference type="FunFam" id="2.40.50.140:FF:000011">
    <property type="entry name" value="30S ribosomal protein S1"/>
    <property type="match status" value="1"/>
</dbReference>
<dbReference type="FunFam" id="2.40.50.140:FF:000016">
    <property type="entry name" value="30S ribosomal protein S1"/>
    <property type="match status" value="1"/>
</dbReference>
<dbReference type="FunFam" id="2.40.50.140:FF:000017">
    <property type="entry name" value="30S ribosomal protein S1"/>
    <property type="match status" value="1"/>
</dbReference>
<dbReference type="FunFam" id="2.40.50.140:FF:000018">
    <property type="entry name" value="30S ribosomal protein S1"/>
    <property type="match status" value="1"/>
</dbReference>
<dbReference type="FunFam" id="2.40.50.140:FF:000021">
    <property type="entry name" value="30S ribosomal protein S1"/>
    <property type="match status" value="1"/>
</dbReference>
<dbReference type="Gene3D" id="2.40.50.140">
    <property type="entry name" value="Nucleic acid-binding proteins"/>
    <property type="match status" value="6"/>
</dbReference>
<dbReference type="InterPro" id="IPR012340">
    <property type="entry name" value="NA-bd_OB-fold"/>
</dbReference>
<dbReference type="InterPro" id="IPR050437">
    <property type="entry name" value="Ribos_protein_bS1-like"/>
</dbReference>
<dbReference type="InterPro" id="IPR000110">
    <property type="entry name" value="Ribosomal_bS1"/>
</dbReference>
<dbReference type="InterPro" id="IPR035104">
    <property type="entry name" value="Ribosomal_protein_S1-like"/>
</dbReference>
<dbReference type="InterPro" id="IPR003029">
    <property type="entry name" value="S1_domain"/>
</dbReference>
<dbReference type="NCBIfam" id="NF004951">
    <property type="entry name" value="PRK06299.1-1"/>
    <property type="match status" value="1"/>
</dbReference>
<dbReference type="NCBIfam" id="NF004952">
    <property type="entry name" value="PRK06299.1-2"/>
    <property type="match status" value="1"/>
</dbReference>
<dbReference type="NCBIfam" id="NF004954">
    <property type="entry name" value="PRK06299.1-4"/>
    <property type="match status" value="1"/>
</dbReference>
<dbReference type="NCBIfam" id="TIGR00717">
    <property type="entry name" value="rpsA"/>
    <property type="match status" value="1"/>
</dbReference>
<dbReference type="PANTHER" id="PTHR10724">
    <property type="entry name" value="30S RIBOSOMAL PROTEIN S1"/>
    <property type="match status" value="1"/>
</dbReference>
<dbReference type="PANTHER" id="PTHR10724:SF7">
    <property type="entry name" value="SMALL RIBOSOMAL SUBUNIT PROTEIN BS1C"/>
    <property type="match status" value="1"/>
</dbReference>
<dbReference type="Pfam" id="PF00575">
    <property type="entry name" value="S1"/>
    <property type="match status" value="5"/>
</dbReference>
<dbReference type="PIRSF" id="PIRSF002111">
    <property type="entry name" value="RpsA"/>
    <property type="match status" value="1"/>
</dbReference>
<dbReference type="PRINTS" id="PR00681">
    <property type="entry name" value="RIBOSOMALS1"/>
</dbReference>
<dbReference type="SMART" id="SM00316">
    <property type="entry name" value="S1"/>
    <property type="match status" value="6"/>
</dbReference>
<dbReference type="SUPFAM" id="SSF50249">
    <property type="entry name" value="Nucleic acid-binding proteins"/>
    <property type="match status" value="6"/>
</dbReference>
<dbReference type="PROSITE" id="PS50126">
    <property type="entry name" value="S1"/>
    <property type="match status" value="6"/>
</dbReference>
<gene>
    <name type="primary">rpsA</name>
    <name type="ordered locus">BU309</name>
</gene>
<name>RS1_BUCAI</name>
<comment type="function">
    <text evidence="1">Binds mRNA; thus facilitating recognition of the initiation point. It is needed to translate mRNA with a short Shine-Dalgarno (SD) purine-rich sequence (By similarity).</text>
</comment>
<comment type="similarity">
    <text evidence="3">Belongs to the bacterial ribosomal protein bS1 family.</text>
</comment>
<reference key="1">
    <citation type="journal article" date="2000" name="Nature">
        <title>Genome sequence of the endocellular bacterial symbiont of aphids Buchnera sp. APS.</title>
        <authorList>
            <person name="Shigenobu S."/>
            <person name="Watanabe H."/>
            <person name="Hattori M."/>
            <person name="Sakaki Y."/>
            <person name="Ishikawa H."/>
        </authorList>
    </citation>
    <scope>NUCLEOTIDE SEQUENCE [LARGE SCALE GENOMIC DNA]</scope>
    <source>
        <strain>APS</strain>
    </source>
</reference>